<protein>
    <recommendedName>
        <fullName evidence="1">DNA repair protein RecO</fullName>
    </recommendedName>
    <alternativeName>
        <fullName evidence="1">Recombination protein O</fullName>
    </alternativeName>
</protein>
<organism>
    <name type="scientific">Rickettsia akari (strain Hartford)</name>
    <dbReference type="NCBI Taxonomy" id="293614"/>
    <lineage>
        <taxon>Bacteria</taxon>
        <taxon>Pseudomonadati</taxon>
        <taxon>Pseudomonadota</taxon>
        <taxon>Alphaproteobacteria</taxon>
        <taxon>Rickettsiales</taxon>
        <taxon>Rickettsiaceae</taxon>
        <taxon>Rickettsieae</taxon>
        <taxon>Rickettsia</taxon>
        <taxon>spotted fever group</taxon>
    </lineage>
</organism>
<keyword id="KW-0227">DNA damage</keyword>
<keyword id="KW-0233">DNA recombination</keyword>
<keyword id="KW-0234">DNA repair</keyword>
<accession>A8GNV8</accession>
<feature type="chain" id="PRO_1000193416" description="DNA repair protein RecO">
    <location>
        <begin position="1"/>
        <end position="237"/>
    </location>
</feature>
<gene>
    <name evidence="1" type="primary">recO</name>
    <name type="ordered locus">A1C_04050</name>
</gene>
<sequence>MNIKDVGVIISKKPLKENTFIITVCTKNHGLYSGVVKESSKKSKFIYQEGNIVDFLWQARLHEHIGIAKCELIKSYTGYLIINKTKLYAFNSIISLIKELCHEREKHSNFFSFLLNYLDNLSKNFCFRDYINFELTLLAKTGYKLDLTKCGVTHVTTDLTYVSPKSARALSYEVGKPYKDKLLILPKFLLSDDSEITLEEKRQALTLTNYFFNRYLFHNNRQPEARQTFVGYILNEG</sequence>
<proteinExistence type="inferred from homology"/>
<name>RECO_RICAH</name>
<comment type="function">
    <text evidence="1">Involved in DNA repair and RecF pathway recombination.</text>
</comment>
<comment type="similarity">
    <text evidence="1">Belongs to the RecO family.</text>
</comment>
<evidence type="ECO:0000255" key="1">
    <source>
        <dbReference type="HAMAP-Rule" id="MF_00201"/>
    </source>
</evidence>
<dbReference type="EMBL" id="CP000847">
    <property type="protein sequence ID" value="ABV75083.1"/>
    <property type="molecule type" value="Genomic_DNA"/>
</dbReference>
<dbReference type="RefSeq" id="WP_012149714.1">
    <property type="nucleotide sequence ID" value="NC_009881.1"/>
</dbReference>
<dbReference type="SMR" id="A8GNV8"/>
<dbReference type="STRING" id="293614.A1C_04050"/>
<dbReference type="KEGG" id="rak:A1C_04050"/>
<dbReference type="eggNOG" id="COG1381">
    <property type="taxonomic scope" value="Bacteria"/>
</dbReference>
<dbReference type="HOGENOM" id="CLU_086029_0_0_5"/>
<dbReference type="Proteomes" id="UP000006830">
    <property type="component" value="Chromosome"/>
</dbReference>
<dbReference type="GO" id="GO:0043590">
    <property type="term" value="C:bacterial nucleoid"/>
    <property type="evidence" value="ECO:0007669"/>
    <property type="project" value="TreeGrafter"/>
</dbReference>
<dbReference type="GO" id="GO:0006310">
    <property type="term" value="P:DNA recombination"/>
    <property type="evidence" value="ECO:0007669"/>
    <property type="project" value="UniProtKB-UniRule"/>
</dbReference>
<dbReference type="GO" id="GO:0006302">
    <property type="term" value="P:double-strand break repair"/>
    <property type="evidence" value="ECO:0007669"/>
    <property type="project" value="TreeGrafter"/>
</dbReference>
<dbReference type="Gene3D" id="2.40.50.140">
    <property type="entry name" value="Nucleic acid-binding proteins"/>
    <property type="match status" value="1"/>
</dbReference>
<dbReference type="Gene3D" id="1.20.1440.120">
    <property type="entry name" value="Recombination protein O, C-terminal domain"/>
    <property type="match status" value="1"/>
</dbReference>
<dbReference type="HAMAP" id="MF_00201">
    <property type="entry name" value="RecO"/>
    <property type="match status" value="1"/>
</dbReference>
<dbReference type="InterPro" id="IPR037278">
    <property type="entry name" value="ARFGAP/RecO"/>
</dbReference>
<dbReference type="InterPro" id="IPR022572">
    <property type="entry name" value="DNA_rep/recomb_RecO_N"/>
</dbReference>
<dbReference type="InterPro" id="IPR012340">
    <property type="entry name" value="NA-bd_OB-fold"/>
</dbReference>
<dbReference type="InterPro" id="IPR003717">
    <property type="entry name" value="RecO"/>
</dbReference>
<dbReference type="InterPro" id="IPR042242">
    <property type="entry name" value="RecO_C"/>
</dbReference>
<dbReference type="NCBIfam" id="TIGR00613">
    <property type="entry name" value="reco"/>
    <property type="match status" value="1"/>
</dbReference>
<dbReference type="PANTHER" id="PTHR33991">
    <property type="entry name" value="DNA REPAIR PROTEIN RECO"/>
    <property type="match status" value="1"/>
</dbReference>
<dbReference type="PANTHER" id="PTHR33991:SF1">
    <property type="entry name" value="DNA REPAIR PROTEIN RECO"/>
    <property type="match status" value="1"/>
</dbReference>
<dbReference type="Pfam" id="PF02565">
    <property type="entry name" value="RecO_C"/>
    <property type="match status" value="1"/>
</dbReference>
<dbReference type="Pfam" id="PF11967">
    <property type="entry name" value="RecO_N"/>
    <property type="match status" value="1"/>
</dbReference>
<dbReference type="SUPFAM" id="SSF57863">
    <property type="entry name" value="ArfGap/RecO-like zinc finger"/>
    <property type="match status" value="1"/>
</dbReference>
<reference key="1">
    <citation type="submission" date="2007-09" db="EMBL/GenBank/DDBJ databases">
        <title>Complete genome sequence of Rickettsia akari.</title>
        <authorList>
            <person name="Madan A."/>
            <person name="Fahey J."/>
            <person name="Helton E."/>
            <person name="Ketteman M."/>
            <person name="Madan A."/>
            <person name="Rodrigues S."/>
            <person name="Sanchez A."/>
            <person name="Whiting M."/>
            <person name="Dasch G."/>
            <person name="Eremeeva M."/>
        </authorList>
    </citation>
    <scope>NUCLEOTIDE SEQUENCE [LARGE SCALE GENOMIC DNA]</scope>
    <source>
        <strain>Hartford</strain>
    </source>
</reference>